<protein>
    <recommendedName>
        <fullName>Serine protease ami</fullName>
        <ecNumber>3.4.21.-</ecNumber>
    </recommendedName>
</protein>
<name>AMI_XENLA</name>
<keyword id="KW-1015">Disulfide bond</keyword>
<keyword id="KW-0325">Glycoprotein</keyword>
<keyword id="KW-0378">Hydrolase</keyword>
<keyword id="KW-0645">Protease</keyword>
<keyword id="KW-1185">Reference proteome</keyword>
<keyword id="KW-0964">Secreted</keyword>
<keyword id="KW-0720">Serine protease</keyword>
<keyword id="KW-0732">Signal</keyword>
<keyword id="KW-0865">Zymogen</keyword>
<sequence length="263" mass="29231">MNISRVLFAVVLVLTVSTYECRPRGRILGGQDSKEKTWPFMASIQKNEVHQCGGVLISDKWVLSAAHCATDSNNSSLHVMLGAISLTKPEQYKIVLKVEREIPHPLYNSTKKHHDLLLLELSEKVTLSEAVKPLPFETENIDIPDGKRCLVAGWGQMKSTGKKPDTLQELWIPVISRDVCNRRNYYDNEITPNMICAIEAKKDSCEGDSGGPLVCDGIAVAIVQGGYRRCGLSKKPGIYTLIAPYKSWIMETMYNATLLPSPL</sequence>
<gene>
    <name evidence="7" type="primary">ami</name>
</gene>
<accession>Q63ZK0</accession>
<accession>Q2PEN7</accession>
<proteinExistence type="evidence at transcript level"/>
<feature type="signal peptide" evidence="3">
    <location>
        <begin position="1"/>
        <end position="21"/>
    </location>
</feature>
<feature type="propeptide" id="PRO_0000245785" description="Activation peptide" evidence="3">
    <location>
        <begin position="22"/>
        <end position="26"/>
    </location>
</feature>
<feature type="chain" id="PRO_0000245786" description="Serine protease ami">
    <location>
        <begin position="27"/>
        <end position="263"/>
    </location>
</feature>
<feature type="domain" description="Peptidase S1" evidence="4">
    <location>
        <begin position="27"/>
        <end position="254"/>
    </location>
</feature>
<feature type="active site" description="Charge relay system" evidence="2">
    <location>
        <position position="67"/>
    </location>
</feature>
<feature type="active site" description="Charge relay system" evidence="2">
    <location>
        <position position="115"/>
    </location>
</feature>
<feature type="active site" description="Charge relay system" evidence="2">
    <location>
        <position position="209"/>
    </location>
</feature>
<feature type="glycosylation site" description="N-linked (GlcNAc...) asparagine" evidence="3">
    <location>
        <position position="2"/>
    </location>
</feature>
<feature type="glycosylation site" description="N-linked (GlcNAc...) asparagine" evidence="3">
    <location>
        <position position="73"/>
    </location>
</feature>
<feature type="glycosylation site" description="N-linked (GlcNAc...) asparagine" evidence="3">
    <location>
        <position position="74"/>
    </location>
</feature>
<feature type="glycosylation site" description="N-linked (GlcNAc...) asparagine" evidence="3">
    <location>
        <position position="108"/>
    </location>
</feature>
<feature type="glycosylation site" description="N-linked (GlcNAc...) asparagine" evidence="3">
    <location>
        <position position="255"/>
    </location>
</feature>
<feature type="disulfide bond" evidence="2 4">
    <location>
        <begin position="52"/>
        <end position="68"/>
    </location>
</feature>
<feature type="disulfide bond" evidence="2 4">
    <location>
        <begin position="149"/>
        <end position="215"/>
    </location>
</feature>
<feature type="disulfide bond" evidence="2 4">
    <location>
        <begin position="180"/>
        <end position="196"/>
    </location>
</feature>
<feature type="disulfide bond" evidence="2 4">
    <location>
        <begin position="205"/>
        <end position="230"/>
    </location>
</feature>
<feature type="sequence conflict" description="In Ref. 1; BAE72683." evidence="6" ref="1">
    <original>K</original>
    <variation>M</variation>
    <location>
        <position position="163"/>
    </location>
</feature>
<dbReference type="EC" id="3.4.21.-"/>
<dbReference type="EMBL" id="AB238233">
    <property type="protein sequence ID" value="BAE72683.1"/>
    <property type="molecule type" value="mRNA"/>
</dbReference>
<dbReference type="EMBL" id="BC082912">
    <property type="protein sequence ID" value="AAH82912.1"/>
    <property type="molecule type" value="mRNA"/>
</dbReference>
<dbReference type="SMR" id="Q63ZK0"/>
<dbReference type="MEROPS" id="S01.191"/>
<dbReference type="GlyCosmos" id="Q63ZK0">
    <property type="glycosylation" value="5 sites, No reported glycans"/>
</dbReference>
<dbReference type="DNASU" id="494791"/>
<dbReference type="KEGG" id="xla:494791"/>
<dbReference type="AGR" id="Xenbase:XB-GENE-973610"/>
<dbReference type="CTD" id="494791"/>
<dbReference type="Xenbase" id="XB-GENE-973610">
    <property type="gene designation" value="cfd.L"/>
</dbReference>
<dbReference type="OMA" id="YTRTAPY"/>
<dbReference type="OrthoDB" id="60866at2759"/>
<dbReference type="Proteomes" id="UP000186698">
    <property type="component" value="Chromosome 1L"/>
</dbReference>
<dbReference type="Bgee" id="494791">
    <property type="expression patterns" value="Expressed in liver and 17 other cell types or tissues"/>
</dbReference>
<dbReference type="GO" id="GO:0005615">
    <property type="term" value="C:extracellular space"/>
    <property type="evidence" value="ECO:0000250"/>
    <property type="project" value="UniProtKB"/>
</dbReference>
<dbReference type="GO" id="GO:0004252">
    <property type="term" value="F:serine-type endopeptidase activity"/>
    <property type="evidence" value="ECO:0000318"/>
    <property type="project" value="GO_Central"/>
</dbReference>
<dbReference type="GO" id="GO:0051604">
    <property type="term" value="P:protein maturation"/>
    <property type="evidence" value="ECO:0000318"/>
    <property type="project" value="GO_Central"/>
</dbReference>
<dbReference type="GO" id="GO:0006508">
    <property type="term" value="P:proteolysis"/>
    <property type="evidence" value="ECO:0007669"/>
    <property type="project" value="UniProtKB-KW"/>
</dbReference>
<dbReference type="CDD" id="cd00190">
    <property type="entry name" value="Tryp_SPc"/>
    <property type="match status" value="1"/>
</dbReference>
<dbReference type="FunFam" id="2.40.10.10:FF:000003">
    <property type="entry name" value="Transmembrane serine protease 3"/>
    <property type="match status" value="1"/>
</dbReference>
<dbReference type="Gene3D" id="2.40.10.10">
    <property type="entry name" value="Trypsin-like serine proteases"/>
    <property type="match status" value="2"/>
</dbReference>
<dbReference type="InterPro" id="IPR009003">
    <property type="entry name" value="Peptidase_S1_PA"/>
</dbReference>
<dbReference type="InterPro" id="IPR043504">
    <property type="entry name" value="Peptidase_S1_PA_chymotrypsin"/>
</dbReference>
<dbReference type="InterPro" id="IPR001314">
    <property type="entry name" value="Peptidase_S1A"/>
</dbReference>
<dbReference type="InterPro" id="IPR001254">
    <property type="entry name" value="Trypsin_dom"/>
</dbReference>
<dbReference type="InterPro" id="IPR018114">
    <property type="entry name" value="TRYPSIN_HIS"/>
</dbReference>
<dbReference type="InterPro" id="IPR033116">
    <property type="entry name" value="TRYPSIN_SER"/>
</dbReference>
<dbReference type="PANTHER" id="PTHR24271:SF54">
    <property type="entry name" value="COMPLEMENT FACTOR D"/>
    <property type="match status" value="1"/>
</dbReference>
<dbReference type="PANTHER" id="PTHR24271">
    <property type="entry name" value="KALLIKREIN-RELATED"/>
    <property type="match status" value="1"/>
</dbReference>
<dbReference type="Pfam" id="PF00089">
    <property type="entry name" value="Trypsin"/>
    <property type="match status" value="1"/>
</dbReference>
<dbReference type="PRINTS" id="PR00722">
    <property type="entry name" value="CHYMOTRYPSIN"/>
</dbReference>
<dbReference type="SMART" id="SM00020">
    <property type="entry name" value="Tryp_SPc"/>
    <property type="match status" value="1"/>
</dbReference>
<dbReference type="SUPFAM" id="SSF50494">
    <property type="entry name" value="Trypsin-like serine proteases"/>
    <property type="match status" value="1"/>
</dbReference>
<dbReference type="PROSITE" id="PS50240">
    <property type="entry name" value="TRYPSIN_DOM"/>
    <property type="match status" value="1"/>
</dbReference>
<dbReference type="PROSITE" id="PS00134">
    <property type="entry name" value="TRYPSIN_HIS"/>
    <property type="match status" value="1"/>
</dbReference>
<dbReference type="PROSITE" id="PS00135">
    <property type="entry name" value="TRYPSIN_SER"/>
    <property type="match status" value="1"/>
</dbReference>
<evidence type="ECO:0000250" key="1"/>
<evidence type="ECO:0000250" key="2">
    <source>
        <dbReference type="UniProtKB" id="P00746"/>
    </source>
</evidence>
<evidence type="ECO:0000255" key="3"/>
<evidence type="ECO:0000255" key="4">
    <source>
        <dbReference type="PROSITE-ProRule" id="PRU00274"/>
    </source>
</evidence>
<evidence type="ECO:0000269" key="5">
    <source>
    </source>
</evidence>
<evidence type="ECO:0000305" key="6"/>
<evidence type="ECO:0000312" key="7">
    <source>
        <dbReference type="EMBL" id="AAH82912.1"/>
    </source>
</evidence>
<evidence type="ECO:0000312" key="8">
    <source>
        <dbReference type="EMBL" id="BAE72683.1"/>
    </source>
</evidence>
<organism>
    <name type="scientific">Xenopus laevis</name>
    <name type="common">African clawed frog</name>
    <dbReference type="NCBI Taxonomy" id="8355"/>
    <lineage>
        <taxon>Eukaryota</taxon>
        <taxon>Metazoa</taxon>
        <taxon>Chordata</taxon>
        <taxon>Craniata</taxon>
        <taxon>Vertebrata</taxon>
        <taxon>Euteleostomi</taxon>
        <taxon>Amphibia</taxon>
        <taxon>Batrachia</taxon>
        <taxon>Anura</taxon>
        <taxon>Pipoidea</taxon>
        <taxon>Pipidae</taxon>
        <taxon>Xenopodinae</taxon>
        <taxon>Xenopus</taxon>
        <taxon>Xenopus</taxon>
    </lineage>
</organism>
<reference evidence="6 8" key="1">
    <citation type="journal article" date="2006" name="Gene Expr. Patterns">
        <title>A novel gene, Ami is expressed in vascular tissue in Xenopus laevis.</title>
        <authorList>
            <person name="Inui M."/>
            <person name="Asashima M."/>
        </authorList>
    </citation>
    <scope>NUCLEOTIDE SEQUENCE [MRNA]</scope>
    <scope>TISSUE SPECIFICITY</scope>
    <scope>DEVELOPMENTAL STAGE</scope>
    <source>
        <tissue evidence="5">Embryo</tissue>
    </source>
</reference>
<reference evidence="7" key="2">
    <citation type="submission" date="2004-09" db="EMBL/GenBank/DDBJ databases">
        <authorList>
            <consortium name="NIH - Xenopus Gene Collection (XGC) project"/>
        </authorList>
    </citation>
    <scope>NUCLEOTIDE SEQUENCE [LARGE SCALE MRNA]</scope>
    <source>
        <tissue>Tadpole</tissue>
    </source>
</reference>
<comment type="function">
    <text evidence="1">Probable serine protease.</text>
</comment>
<comment type="subcellular location">
    <subcellularLocation>
        <location evidence="1">Secreted</location>
    </subcellularLocation>
</comment>
<comment type="tissue specificity">
    <text evidence="5">In the embryo, localizes to paraxial regions at the neurula stage and anterior ventral regions at the tailbud stage. From the late tailbud to tadpole stage, expressed along the forming blood vessels including the anterior cardinal veins, posterior cardinal veins, intersomitic veins, dorsal longitudinal anastomosing vessel, dorsal aorta, pronephric sinus and most prominently around the vascular vitelline network, where expression shows left-right asymmetry in the stage 42 embryo. Localizes to endothelial cells. In adults, shows highest expression in liver with moderate levels of expression in the fat body, lung, gut and vessels. Weakly expressed in adult heart, muscle, testis and ovary.</text>
</comment>
<comment type="developmental stage">
    <text evidence="5">First expressed at the mid-neurula stage (stage 16) and remains at a constant level until the tadpole stage.</text>
</comment>
<comment type="miscellaneous">
    <text evidence="5">Was named 'ami' because of its expression pattern; 'ami' means 'mesh' or 'net' in Japanese.</text>
</comment>
<comment type="similarity">
    <text evidence="4">Belongs to the peptidase S1 family.</text>
</comment>